<organism>
    <name type="scientific">Candida albicans (strain SC5314 / ATCC MYA-2876)</name>
    <name type="common">Yeast</name>
    <dbReference type="NCBI Taxonomy" id="237561"/>
    <lineage>
        <taxon>Eukaryota</taxon>
        <taxon>Fungi</taxon>
        <taxon>Dikarya</taxon>
        <taxon>Ascomycota</taxon>
        <taxon>Saccharomycotina</taxon>
        <taxon>Pichiomycetes</taxon>
        <taxon>Debaryomycetaceae</taxon>
        <taxon>Candida/Lodderomyces clade</taxon>
        <taxon>Candida</taxon>
    </lineage>
</organism>
<feature type="chain" id="PRO_0000425798" description="Histidine protein kinase 1">
    <location>
        <begin position="1"/>
        <end position="2471"/>
    </location>
</feature>
<feature type="domain" description="Protein kinase" evidence="3">
    <location>
        <begin position="358"/>
        <end position="636"/>
    </location>
</feature>
<feature type="domain" description="Histidine kinase" evidence="2">
    <location>
        <begin position="2004"/>
        <end position="2225"/>
    </location>
</feature>
<feature type="domain" description="Response regulatory" evidence="4">
    <location>
        <begin position="2340"/>
        <end position="2466"/>
    </location>
</feature>
<feature type="region of interest" description="Disordered" evidence="5">
    <location>
        <begin position="1"/>
        <end position="30"/>
    </location>
</feature>
<feature type="region of interest" description="Disordered" evidence="5">
    <location>
        <begin position="52"/>
        <end position="75"/>
    </location>
</feature>
<feature type="region of interest" description="Disordered" evidence="5">
    <location>
        <begin position="395"/>
        <end position="415"/>
    </location>
</feature>
<feature type="compositionally biased region" description="Polar residues" evidence="5">
    <location>
        <begin position="1"/>
        <end position="10"/>
    </location>
</feature>
<feature type="compositionally biased region" description="Basic and acidic residues" evidence="5">
    <location>
        <begin position="11"/>
        <end position="30"/>
    </location>
</feature>
<feature type="modified residue" description="Phosphohistidine; by autocatalysis" evidence="2">
    <location>
        <position position="2007"/>
    </location>
</feature>
<feature type="modified residue" description="4-aspartylphosphate" evidence="4">
    <location>
        <position position="2394"/>
    </location>
</feature>
<feature type="sequence conflict" description="In Ref. 1; AAC39451." evidence="22" ref="1">
    <original>V</original>
    <variation>I</variation>
    <location>
        <position position="2298"/>
    </location>
</feature>
<comment type="function">
    <text evidence="7 8 12 13 14 17 19 21">Histidine kinase involved in a two-component signaling pathway that regulates cell wall mannan and glucan biosynthesis. Regulates quorum sensing as well as hyphal formation, biofilm formation, chlamidospore formation, and virulence. Plays a prominent role in phagocyte activation. Involved in the covering of the most potent pro-inflammatory cell wall molecules, the beta-glucans, underneath a dense mannan layer, so that the pathogen becomes partly invisible for immune cells such as phagocytes.</text>
</comment>
<comment type="catalytic activity">
    <reaction>
        <text>ATP + protein L-histidine = ADP + protein N-phospho-L-histidine.</text>
        <dbReference type="EC" id="2.7.13.3"/>
    </reaction>
</comment>
<comment type="induction">
    <text evidence="9 11 15 18 20">Expression is detected as early as 1 hour after infection of reconstituted human esophageal tissue and increases thereafter up to 48 hours postinfection. Expression is also increased when cells are exposed to several types of stress. Expression is decreased by Pseudomonas aeruginosa secretions. Moreover, expression is regulated by NGR1 and BCR1.</text>
</comment>
<comment type="domain">
    <text>The protein kinase domain is predicted to be catalytically inactive.</text>
</comment>
<comment type="PTM">
    <text evidence="1">The phosphorelay mechanism involves the sequential transfer of a phosphate group from His-2007 (H1) in the histidine kinase domain (transmitter domain) to Asp-2394 (D1) of the response regulatory domain (receiver domain). This transfer probably occurs between two CHK1 molecules, rather than intramolecularly (By similarity).</text>
</comment>
<comment type="disruption phenotype">
    <text evidence="6 7 8 10 11 13 14 16 17 19">Impairs the hyphal formation and attenuates the virulence in a mouse systemic candidiasis model and towards reconstituted human esophageal tissue. Leads to extensive flocculation under conditions that stimulate germ-tube formation. Also leads to increased growth-inhibitory and killing effect by human neutrophils (polymorphonuclear leukocytes) and to hypersensitivity to fluconazole and voriconazole.</text>
</comment>
<proteinExistence type="evidence at transcript level"/>
<evidence type="ECO:0000250" key="1"/>
<evidence type="ECO:0000255" key="2">
    <source>
        <dbReference type="PROSITE-ProRule" id="PRU00107"/>
    </source>
</evidence>
<evidence type="ECO:0000255" key="3">
    <source>
        <dbReference type="PROSITE-ProRule" id="PRU00159"/>
    </source>
</evidence>
<evidence type="ECO:0000255" key="4">
    <source>
        <dbReference type="PROSITE-ProRule" id="PRU00169"/>
    </source>
</evidence>
<evidence type="ECO:0000256" key="5">
    <source>
        <dbReference type="SAM" id="MobiDB-lite"/>
    </source>
</evidence>
<evidence type="ECO:0000269" key="6">
    <source>
    </source>
</evidence>
<evidence type="ECO:0000269" key="7">
    <source>
    </source>
</evidence>
<evidence type="ECO:0000269" key="8">
    <source>
    </source>
</evidence>
<evidence type="ECO:0000269" key="9">
    <source>
    </source>
</evidence>
<evidence type="ECO:0000269" key="10">
    <source>
    </source>
</evidence>
<evidence type="ECO:0000269" key="11">
    <source>
    </source>
</evidence>
<evidence type="ECO:0000269" key="12">
    <source>
    </source>
</evidence>
<evidence type="ECO:0000269" key="13">
    <source>
    </source>
</evidence>
<evidence type="ECO:0000269" key="14">
    <source>
    </source>
</evidence>
<evidence type="ECO:0000269" key="15">
    <source>
    </source>
</evidence>
<evidence type="ECO:0000269" key="16">
    <source>
    </source>
</evidence>
<evidence type="ECO:0000269" key="17">
    <source>
    </source>
</evidence>
<evidence type="ECO:0000269" key="18">
    <source>
    </source>
</evidence>
<evidence type="ECO:0000269" key="19">
    <source>
    </source>
</evidence>
<evidence type="ECO:0000269" key="20">
    <source>
    </source>
</evidence>
<evidence type="ECO:0000269" key="21">
    <source>
    </source>
</evidence>
<evidence type="ECO:0000305" key="22"/>
<gene>
    <name type="primary">CHK1</name>
    <name type="ordered locus">CAALFM_C203320WA</name>
    <name type="ORF">CaO19.8515</name>
    <name type="ORF">CaO19.896</name>
</gene>
<name>CHK1_CANAL</name>
<dbReference type="EC" id="2.7.13.3"/>
<dbReference type="EMBL" id="AF013273">
    <property type="protein sequence ID" value="AAC39451.1"/>
    <property type="molecule type" value="Genomic_DNA"/>
</dbReference>
<dbReference type="EMBL" id="CP017624">
    <property type="protein sequence ID" value="AOW27368.1"/>
    <property type="molecule type" value="Genomic_DNA"/>
</dbReference>
<dbReference type="RefSeq" id="XP_721017.2">
    <property type="nucleotide sequence ID" value="XM_715924.2"/>
</dbReference>
<dbReference type="SMR" id="Q5AHA0"/>
<dbReference type="STRING" id="237561.Q5AHA0"/>
<dbReference type="EnsemblFungi" id="C2_03320W_A-T">
    <property type="protein sequence ID" value="C2_03320W_A-T-p1"/>
    <property type="gene ID" value="C2_03320W_A"/>
</dbReference>
<dbReference type="GeneID" id="3637394"/>
<dbReference type="KEGG" id="cal:CAALFM_C203320WA"/>
<dbReference type="CGD" id="CAL0000185875">
    <property type="gene designation" value="CHK1"/>
</dbReference>
<dbReference type="VEuPathDB" id="FungiDB:C2_03320W_A"/>
<dbReference type="eggNOG" id="KOG0519">
    <property type="taxonomic scope" value="Eukaryota"/>
</dbReference>
<dbReference type="eggNOG" id="KOG0583">
    <property type="taxonomic scope" value="Eukaryota"/>
</dbReference>
<dbReference type="HOGENOM" id="CLU_000835_0_0_1"/>
<dbReference type="InParanoid" id="Q5AHA0"/>
<dbReference type="OrthoDB" id="60033at2759"/>
<dbReference type="PHI-base" id="PHI:11569"/>
<dbReference type="PHI-base" id="PHI:136"/>
<dbReference type="PRO" id="PR:Q5AHA0"/>
<dbReference type="Proteomes" id="UP000000559">
    <property type="component" value="Chromosome 2"/>
</dbReference>
<dbReference type="GO" id="GO:0005524">
    <property type="term" value="F:ATP binding"/>
    <property type="evidence" value="ECO:0007669"/>
    <property type="project" value="UniProtKB-KW"/>
</dbReference>
<dbReference type="GO" id="GO:0000155">
    <property type="term" value="F:phosphorelay sensor kinase activity"/>
    <property type="evidence" value="ECO:0007669"/>
    <property type="project" value="InterPro"/>
</dbReference>
<dbReference type="GO" id="GO:0071555">
    <property type="term" value="P:cell wall organization"/>
    <property type="evidence" value="ECO:0007669"/>
    <property type="project" value="UniProtKB-KW"/>
</dbReference>
<dbReference type="GO" id="GO:0097308">
    <property type="term" value="P:cellular response to farnesol"/>
    <property type="evidence" value="ECO:0000315"/>
    <property type="project" value="CGD"/>
</dbReference>
<dbReference type="GO" id="GO:0034614">
    <property type="term" value="P:cellular response to reactive oxygen species"/>
    <property type="evidence" value="ECO:0000315"/>
    <property type="project" value="CGD"/>
</dbReference>
<dbReference type="GO" id="GO:0030447">
    <property type="term" value="P:filamentous growth"/>
    <property type="evidence" value="ECO:0000315"/>
    <property type="project" value="CGD"/>
</dbReference>
<dbReference type="GO" id="GO:0036180">
    <property type="term" value="P:filamentous growth of a population of unicellular organisms in response to biotic stimulus"/>
    <property type="evidence" value="ECO:0000315"/>
    <property type="project" value="CGD"/>
</dbReference>
<dbReference type="GO" id="GO:0009272">
    <property type="term" value="P:fungal-type cell wall biogenesis"/>
    <property type="evidence" value="ECO:0000315"/>
    <property type="project" value="CGD"/>
</dbReference>
<dbReference type="GO" id="GO:0051042">
    <property type="term" value="P:negative regulation of calcium-independent cell-cell adhesion"/>
    <property type="evidence" value="ECO:0000315"/>
    <property type="project" value="CGD"/>
</dbReference>
<dbReference type="GO" id="GO:0050765">
    <property type="term" value="P:negative regulation of phagocytosis"/>
    <property type="evidence" value="ECO:0000315"/>
    <property type="project" value="CGD"/>
</dbReference>
<dbReference type="GO" id="GO:1900445">
    <property type="term" value="P:positive regulation of filamentous growth of a population of unicellular organisms in response to biotic stimulus"/>
    <property type="evidence" value="ECO:0000315"/>
    <property type="project" value="CGD"/>
</dbReference>
<dbReference type="GO" id="GO:1900231">
    <property type="term" value="P:regulation of single-species biofilm formation on inanimate substrate"/>
    <property type="evidence" value="ECO:0000315"/>
    <property type="project" value="CGD"/>
</dbReference>
<dbReference type="GO" id="GO:0001402">
    <property type="term" value="P:signal transduction involved in filamentous growth"/>
    <property type="evidence" value="ECO:0000315"/>
    <property type="project" value="CGD"/>
</dbReference>
<dbReference type="GO" id="GO:0044011">
    <property type="term" value="P:single-species biofilm formation on inanimate substrate"/>
    <property type="evidence" value="ECO:0000315"/>
    <property type="project" value="CGD"/>
</dbReference>
<dbReference type="CDD" id="cd16922">
    <property type="entry name" value="HATPase_EvgS-ArcB-TorS-like"/>
    <property type="match status" value="1"/>
</dbReference>
<dbReference type="CDD" id="cd00082">
    <property type="entry name" value="HisKA"/>
    <property type="match status" value="1"/>
</dbReference>
<dbReference type="CDD" id="cd17546">
    <property type="entry name" value="REC_hyHK_CKI1_RcsC-like"/>
    <property type="match status" value="1"/>
</dbReference>
<dbReference type="FunFam" id="3.30.565.10:FF:000349">
    <property type="entry name" value="Histidine kinase osmosensor and regulator, putative"/>
    <property type="match status" value="1"/>
</dbReference>
<dbReference type="FunFam" id="3.40.50.2300:FF:000679">
    <property type="entry name" value="Peroxide stress-activated histidine kinase mak2"/>
    <property type="match status" value="1"/>
</dbReference>
<dbReference type="FunFam" id="1.10.287.130:FF:000002">
    <property type="entry name" value="Two-component osmosensing histidine kinase"/>
    <property type="match status" value="1"/>
</dbReference>
<dbReference type="Gene3D" id="1.10.287.130">
    <property type="match status" value="1"/>
</dbReference>
<dbReference type="Gene3D" id="3.30.450.40">
    <property type="match status" value="1"/>
</dbReference>
<dbReference type="Gene3D" id="3.40.50.2300">
    <property type="match status" value="1"/>
</dbReference>
<dbReference type="Gene3D" id="3.30.565.10">
    <property type="entry name" value="Histidine kinase-like ATPase, C-terminal domain"/>
    <property type="match status" value="1"/>
</dbReference>
<dbReference type="Gene3D" id="1.10.510.10">
    <property type="entry name" value="Transferase(Phosphotransferase) domain 1"/>
    <property type="match status" value="1"/>
</dbReference>
<dbReference type="InterPro" id="IPR041664">
    <property type="entry name" value="AAA_16"/>
</dbReference>
<dbReference type="InterPro" id="IPR011006">
    <property type="entry name" value="CheY-like_superfamily"/>
</dbReference>
<dbReference type="InterPro" id="IPR003018">
    <property type="entry name" value="GAF"/>
</dbReference>
<dbReference type="InterPro" id="IPR029016">
    <property type="entry name" value="GAF-like_dom_sf"/>
</dbReference>
<dbReference type="InterPro" id="IPR036890">
    <property type="entry name" value="HATPase_C_sf"/>
</dbReference>
<dbReference type="InterPro" id="IPR005467">
    <property type="entry name" value="His_kinase_dom"/>
</dbReference>
<dbReference type="InterPro" id="IPR003661">
    <property type="entry name" value="HisK_dim/P_dom"/>
</dbReference>
<dbReference type="InterPro" id="IPR036097">
    <property type="entry name" value="HisK_dim/P_sf"/>
</dbReference>
<dbReference type="InterPro" id="IPR011009">
    <property type="entry name" value="Kinase-like_dom_sf"/>
</dbReference>
<dbReference type="InterPro" id="IPR027417">
    <property type="entry name" value="P-loop_NTPase"/>
</dbReference>
<dbReference type="InterPro" id="IPR000719">
    <property type="entry name" value="Prot_kinase_dom"/>
</dbReference>
<dbReference type="InterPro" id="IPR004358">
    <property type="entry name" value="Sig_transdc_His_kin-like_C"/>
</dbReference>
<dbReference type="InterPro" id="IPR001789">
    <property type="entry name" value="Sig_transdc_resp-reg_receiver"/>
</dbReference>
<dbReference type="PANTHER" id="PTHR45339">
    <property type="entry name" value="HYBRID SIGNAL TRANSDUCTION HISTIDINE KINASE J"/>
    <property type="match status" value="1"/>
</dbReference>
<dbReference type="PANTHER" id="PTHR45339:SF1">
    <property type="entry name" value="HYBRID SIGNAL TRANSDUCTION HISTIDINE KINASE J"/>
    <property type="match status" value="1"/>
</dbReference>
<dbReference type="Pfam" id="PF13191">
    <property type="entry name" value="AAA_16"/>
    <property type="match status" value="1"/>
</dbReference>
<dbReference type="Pfam" id="PF01590">
    <property type="entry name" value="GAF"/>
    <property type="match status" value="1"/>
</dbReference>
<dbReference type="Pfam" id="PF02518">
    <property type="entry name" value="HATPase_c"/>
    <property type="match status" value="1"/>
</dbReference>
<dbReference type="Pfam" id="PF00512">
    <property type="entry name" value="HisKA"/>
    <property type="match status" value="1"/>
</dbReference>
<dbReference type="Pfam" id="PF00069">
    <property type="entry name" value="Pkinase"/>
    <property type="match status" value="1"/>
</dbReference>
<dbReference type="Pfam" id="PF00072">
    <property type="entry name" value="Response_reg"/>
    <property type="match status" value="1"/>
</dbReference>
<dbReference type="Pfam" id="PF25503">
    <property type="entry name" value="TPR_CHK1"/>
    <property type="match status" value="1"/>
</dbReference>
<dbReference type="PRINTS" id="PR00344">
    <property type="entry name" value="BCTRLSENSOR"/>
</dbReference>
<dbReference type="SMART" id="SM00387">
    <property type="entry name" value="HATPase_c"/>
    <property type="match status" value="1"/>
</dbReference>
<dbReference type="SMART" id="SM00388">
    <property type="entry name" value="HisKA"/>
    <property type="match status" value="1"/>
</dbReference>
<dbReference type="SMART" id="SM00448">
    <property type="entry name" value="REC"/>
    <property type="match status" value="1"/>
</dbReference>
<dbReference type="SMART" id="SM00220">
    <property type="entry name" value="S_TKc"/>
    <property type="match status" value="1"/>
</dbReference>
<dbReference type="SUPFAM" id="SSF55874">
    <property type="entry name" value="ATPase domain of HSP90 chaperone/DNA topoisomerase II/histidine kinase"/>
    <property type="match status" value="1"/>
</dbReference>
<dbReference type="SUPFAM" id="SSF52172">
    <property type="entry name" value="CheY-like"/>
    <property type="match status" value="1"/>
</dbReference>
<dbReference type="SUPFAM" id="SSF55781">
    <property type="entry name" value="GAF domain-like"/>
    <property type="match status" value="1"/>
</dbReference>
<dbReference type="SUPFAM" id="SSF47384">
    <property type="entry name" value="Homodimeric domain of signal transducing histidine kinase"/>
    <property type="match status" value="1"/>
</dbReference>
<dbReference type="SUPFAM" id="SSF52540">
    <property type="entry name" value="P-loop containing nucleoside triphosphate hydrolases"/>
    <property type="match status" value="1"/>
</dbReference>
<dbReference type="SUPFAM" id="SSF56112">
    <property type="entry name" value="Protein kinase-like (PK-like)"/>
    <property type="match status" value="1"/>
</dbReference>
<dbReference type="PROSITE" id="PS50109">
    <property type="entry name" value="HIS_KIN"/>
    <property type="match status" value="1"/>
</dbReference>
<dbReference type="PROSITE" id="PS50011">
    <property type="entry name" value="PROTEIN_KINASE_DOM"/>
    <property type="match status" value="1"/>
</dbReference>
<dbReference type="PROSITE" id="PS50110">
    <property type="entry name" value="RESPONSE_REGULATORY"/>
    <property type="match status" value="1"/>
</dbReference>
<reference key="1">
    <citation type="journal article" date="1998" name="Yeast">
        <title>Identification of a putative histidine kinase two-component phosphorelay gene (CaHK1) in Candida albicans.</title>
        <authorList>
            <person name="Calera J.A."/>
            <person name="Choi G.H."/>
            <person name="Calderone R.A."/>
        </authorList>
    </citation>
    <scope>NUCLEOTIDE SEQUENCE [GENOMIC DNA]</scope>
    <source>
        <strain>SC5314 / ATCC MYA-2876</strain>
    </source>
</reference>
<reference key="2">
    <citation type="journal article" date="2004" name="Proc. Natl. Acad. Sci. U.S.A.">
        <title>The diploid genome sequence of Candida albicans.</title>
        <authorList>
            <person name="Jones T."/>
            <person name="Federspiel N.A."/>
            <person name="Chibana H."/>
            <person name="Dungan J."/>
            <person name="Kalman S."/>
            <person name="Magee B.B."/>
            <person name="Newport G."/>
            <person name="Thorstenson Y.R."/>
            <person name="Agabian N."/>
            <person name="Magee P.T."/>
            <person name="Davis R.W."/>
            <person name="Scherer S."/>
        </authorList>
    </citation>
    <scope>NUCLEOTIDE SEQUENCE [LARGE SCALE GENOMIC DNA]</scope>
    <source>
        <strain>SC5314 / ATCC MYA-2876</strain>
    </source>
</reference>
<reference key="3">
    <citation type="journal article" date="2007" name="Genome Biol.">
        <title>Assembly of the Candida albicans genome into sixteen supercontigs aligned on the eight chromosomes.</title>
        <authorList>
            <person name="van het Hoog M."/>
            <person name="Rast T.J."/>
            <person name="Martchenko M."/>
            <person name="Grindle S."/>
            <person name="Dignard D."/>
            <person name="Hogues H."/>
            <person name="Cuomo C."/>
            <person name="Berriman M."/>
            <person name="Scherer S."/>
            <person name="Magee B.B."/>
            <person name="Whiteway M."/>
            <person name="Chibana H."/>
            <person name="Nantel A."/>
            <person name="Magee P.T."/>
        </authorList>
    </citation>
    <scope>GENOME REANNOTATION</scope>
    <source>
        <strain>SC5314 / ATCC MYA-2876</strain>
    </source>
</reference>
<reference key="4">
    <citation type="journal article" date="2013" name="Genome Biol.">
        <title>Assembly of a phased diploid Candida albicans genome facilitates allele-specific measurements and provides a simple model for repeat and indel structure.</title>
        <authorList>
            <person name="Muzzey D."/>
            <person name="Schwartz K."/>
            <person name="Weissman J.S."/>
            <person name="Sherlock G."/>
        </authorList>
    </citation>
    <scope>NUCLEOTIDE SEQUENCE [LARGE SCALE GENOMIC DNA]</scope>
    <scope>GENOME REANNOTATION</scope>
    <source>
        <strain>SC5314 / ATCC MYA-2876</strain>
    </source>
</reference>
<reference key="5">
    <citation type="journal article" date="1999" name="Microbiology">
        <title>Flocculation of hyphae is associated with a deletion in the putative CaHK1 two-component histidine kinase gene from Candida albicans.</title>
        <authorList>
            <person name="Calera J.A."/>
            <person name="Calderone R."/>
        </authorList>
    </citation>
    <scope>DISRUPTION PHENOTYPE</scope>
</reference>
<reference key="6">
    <citation type="journal article" date="1999" name="Infect. Immun.">
        <title>Avirulence of Candida albicans CaHK1 mutants in a murine model of hematogenously disseminated candidiasis.</title>
        <authorList>
            <person name="Calera J.A."/>
            <person name="Zhao X.J."/>
            <person name="De Bernardis F."/>
            <person name="Sheridan M."/>
            <person name="Calderone R."/>
        </authorList>
    </citation>
    <scope>FUNCTION</scope>
    <scope>DISRUPTION PHENOTYPE</scope>
</reference>
<reference key="7">
    <citation type="journal article" date="1999" name="J. Bacteriol.">
        <title>Roles of three histidine kinase genes in hyphal development and virulence of the pathogenic fungus Candida albicans.</title>
        <authorList>
            <person name="Yamada-Okabe T."/>
            <person name="Mio T."/>
            <person name="Ono N."/>
            <person name="Kashima Y."/>
            <person name="Matsui M."/>
            <person name="Arisawa M."/>
            <person name="Yamada-Okabe H."/>
        </authorList>
    </citation>
    <scope>FUNCTION</scope>
    <scope>DISRUPTION PHENOTYPE</scope>
</reference>
<reference key="8">
    <citation type="journal article" date="2001" name="Mol. Microbiol.">
        <title>Transcript profiling in Candida albicans reveals new cellular functions for the transcriptional repressors CaTup1, CaMig1 and CaNrg1.</title>
        <authorList>
            <person name="Murad A.M."/>
            <person name="d'Enfert C."/>
            <person name="Gaillardin C."/>
            <person name="Tournu H."/>
            <person name="Tekaia F."/>
            <person name="Talibi D."/>
            <person name="Marechal D."/>
            <person name="Marchais V."/>
            <person name="Cottin J."/>
            <person name="Brown A.J."/>
        </authorList>
    </citation>
    <scope>INDUCTION</scope>
</reference>
<reference key="9">
    <citation type="journal article" date="2002" name="Infect. Immun.">
        <title>Deletion of the two-component histidine kinase gene (CHK1) of Candida albicans contributes to enhanced growth inhibition and killing by human neutrophils in vitro.</title>
        <authorList>
            <person name="Torosantucci A."/>
            <person name="Chiani P."/>
            <person name="De Bernardis F."/>
            <person name="Cassone A."/>
            <person name="Calera J.A."/>
            <person name="Calderone R."/>
        </authorList>
    </citation>
    <scope>DISRUPTION PHENOTYPE</scope>
</reference>
<reference key="10">
    <citation type="journal article" date="2002" name="Infect. Immun.">
        <title>Temporal expression of the Candida albicans genes CHK1 and CSSK1, adherence, and morphogenesis in a model of reconstituted human esophageal epithelial candidiasis.</title>
        <authorList>
            <person name="Li D."/>
            <person name="Bernhardt J."/>
            <person name="Calderone R."/>
        </authorList>
    </citation>
    <scope>DISRUPTION PHENOTYPE</scope>
    <scope>INDUCTION</scope>
</reference>
<reference key="11">
    <citation type="journal article" date="2003" name="FEMS Yeast Res.">
        <title>The role of the Candida albicans histidine kinase (CHK1) gene in the regulation of cell wall mannan and glucan biosynthesis.</title>
        <authorList>
            <person name="Kruppa M."/>
            <person name="Goins T."/>
            <person name="Cutler J.E."/>
            <person name="Lowman D."/>
            <person name="Williams D."/>
            <person name="Chauhan N."/>
            <person name="Menon V."/>
            <person name="Singh P."/>
            <person name="Li D."/>
            <person name="Calderone R."/>
        </authorList>
    </citation>
    <scope>FUNCTION</scope>
</reference>
<reference key="12">
    <citation type="journal article" date="2004" name="Eukaryot. Cell">
        <title>The two-component signal transduction protein Chk1p regulates quorum sensing in Candida albicans.</title>
        <authorList>
            <person name="Kruppa M."/>
            <person name="Krom B.P."/>
            <person name="Chauhan N."/>
            <person name="Bambach A.V."/>
            <person name="Cihlar R.L."/>
            <person name="Calderone R.A."/>
        </authorList>
    </citation>
    <scope>FUNCTION</scope>
    <scope>DISRUPTION PHENOTYPE</scope>
</reference>
<reference key="13">
    <citation type="journal article" date="2004" name="FEMS Yeast Res.">
        <title>The histidine kinases of Candida albicans: regulation of cell wall mannan biosynthesis.</title>
        <authorList>
            <person name="Kruppa M."/>
            <person name="Jabra-Rizk M.A."/>
            <person name="Meiller T.F."/>
            <person name="Calderone R."/>
        </authorList>
    </citation>
    <scope>FUNCTION</scope>
    <scope>DISRUPTION PHENOTYPE</scope>
</reference>
<reference key="14">
    <citation type="journal article" date="2004" name="Microbiology">
        <title>Studies on the regulation of the two-component histidine kinase gene CHK1 in Candida albicans using the heterologous lacZ reporter gene.</title>
        <authorList>
            <person name="Li D."/>
            <person name="Gurkovska V."/>
            <person name="Sheridan M."/>
            <person name="Calderone R."/>
            <person name="Chauhan N."/>
        </authorList>
    </citation>
    <scope>INDUCTION</scope>
</reference>
<reference key="15">
    <citation type="journal article" date="2007" name="Antimicrob. Agents Chemother.">
        <title>The Ssk1p response regulator and Chk1p histidine kinase mutants of Candida albicans are hypersensitive to fluconazole and voriconazole.</title>
        <authorList>
            <person name="Chauhan N."/>
            <person name="Kruppa M."/>
            <person name="Calderone R."/>
        </authorList>
    </citation>
    <scope>DISRUPTION PHENOTYPE</scope>
</reference>
<reference key="16">
    <citation type="journal article" date="2009" name="Fungal Genet. Biol.">
        <title>The Candida albicans histidine kinase Chk1p: signaling and cell wall mannan.</title>
        <authorList>
            <person name="Li D."/>
            <person name="Williams D."/>
            <person name="Lowman D."/>
            <person name="Monteiro M.A."/>
            <person name="Tan X."/>
            <person name="Kruppa M."/>
            <person name="Fonzi W."/>
            <person name="Roman E."/>
            <person name="Pla J."/>
            <person name="Calderone R."/>
        </authorList>
    </citation>
    <scope>FUNCTION</scope>
    <scope>DISRUPTION PHENOTYPE</scope>
</reference>
<reference key="17">
    <citation type="journal article" date="2010" name="Microbiology">
        <title>Pseudomonas aeruginosa secreted factors impair biofilm development in Candida albicans.</title>
        <authorList>
            <person name="Holcombe L.J."/>
            <person name="McAlester G."/>
            <person name="Munro C.A."/>
            <person name="Enjalbert B."/>
            <person name="Brown A.J."/>
            <person name="Gow N.A."/>
            <person name="Ding C."/>
            <person name="Butler G."/>
            <person name="O'Gara F."/>
            <person name="Morrissey J.P."/>
        </authorList>
    </citation>
    <scope>INDUCTION</scope>
</reference>
<reference key="18">
    <citation type="journal article" date="2010" name="Microbiology">
        <title>Deletion of the Candida albicans histidine kinase gene CHK1 improves recognition by phagocytes through an increased exposure of cell wall beta-1,3-glucans.</title>
        <authorList>
            <person name="Klippel N."/>
            <person name="Cui S."/>
            <person name="Groebe L."/>
            <person name="Bilitewski U."/>
        </authorList>
    </citation>
    <scope>FUNCTION</scope>
    <scope>DISRUPTION PHENOTYPE</scope>
</reference>
<reference key="19">
    <citation type="journal article" date="2013" name="Eukaryot. Cell">
        <title>Identification of genes upregulated by the transcription factor Bcr1 that are involved in impermeability, impenetrability, and drug resistance of Candida albicans a/alpha biofilms.</title>
        <authorList>
            <person name="Srikantha T."/>
            <person name="Daniels K.J."/>
            <person name="Pujol C."/>
            <person name="Kim E."/>
            <person name="Soll D.R."/>
        </authorList>
    </citation>
    <scope>INDUCTION</scope>
</reference>
<reference key="20">
    <citation type="journal article" date="2013" name="Zhonghua Yi Xue Za Zhi">
        <title>Effects of histidine kinase gene CHK1 on some biological characteristics of Candida albicans.</title>
        <authorList>
            <person name="Su H.C."/>
            <person name="Cheng B."/>
        </authorList>
    </citation>
    <scope>FUNCTION</scope>
</reference>
<sequence length="2471" mass="281795">MSMNFFNSSEPARDHKPDQEKETVMTTEHYEFERPDVKAIRNFKFFRSDETETKKGPNLHISDLSPLESQSVPPSALSLNHSIIPDQYERRQDTPDPIHTPEISLSDYLYDQTLSPQGFDNSRENFNIHKTIASLFEDNSSVVSQESTDDTKTTLSSETCDSFSLNNASYLTNINFVQNHLQYLSQNVLGNRTSNSLPPSSSSQIDFDASNLTPDSIPGYILNKKLGSVHQSTDSVYNAIKIPQNEEYNCCTKASASQNPTNLNSKVIVRLSPNIFQNLSLSRFLNEWYILSGKHSSKEHQIWSNESLTNEYVQDKTIPTFDKESARFRPTLPINIPGILYPQEIINFCVNSHDYPLEHPSQSTDQKRFAMVYQDNDYKTFKELSMFTLHELQTRQGSYSSNESRRKSSSGFNIGVNATTTEAGSLESFSNLMQNHHLGATSTNGDPFHSKLAKFEYGVSKSPMKLIEILTDIMRVVETISVIHELGFVHNGLTSSNLLKSEKNVRDIKITGWGFAFSFTENCSQGYRNKHLAQVQDLIPYMAPEVLAITNSVVDYRSDFYSLGVIMYELVLGILPFKNSNPQKLIRMHTFENPIAPSALAPGWISEKLSGVIMKLLEKHPHNRYTDCHSLLHDLIEVKNMYISKLLDSGETIPNSNLNLSDRQYYLTKENLLHPEKMGITPVLGLKESFIGRRDFLQNVTEVYNNSKNGIDLLFISGESGRGKTIILQDLRAAAVLKQDFYYSWKFSFFGADTHVYRFLVEGVQKIITQILNSSEEIQNTWRDVILTHIPIDLSILFYLIPELKVLLGKKYTSIYKHKIGMGMLKRSFKEDQTSRLEIKLRQILKEFFKLVAKQGLSIFLDDVQWCSEESWRLLCDVLDFDSSGEVRESYNIKIVVCYALNADHLENVNIEHKKISFCRYAKQSHLNLREFSIPHIPLEDAIEFLCEPYTRSHDHECNSKKSDVIANLNCTNEYPQNTCKVIPSIIQELYQSSEGNVLLLIFLTRMTKLSGKVPFQRFSVKNSYLYDHLSNSNYGTTRKEILTNYLNMGTNSDTRALLKVAALISNGSGFFFSDLIVATDLPMAEAFQLLQICIHSRIIVPTSTYYKIPMDLIASDQTPFDLTDDNIWKLATLCSYKFYHDSICTHIIKELNASGEFKELSRLCGLRFYNTITKERLLNIGGYLQMATHFRNSYEVAGPEENEKYVEVLVQAGRYAISTYNMKLSQWFFNVVGELVYNLDSKTQLKSVLTIAENHFNSREFEQCLSVVENAQRKFGFDRLIFSIQIVRCKIELGDYDEAHRIAIECLKELGVPLDDDDEYTSENSLETCLGKIPLSVADIRGILKIKRCKNSRTLLMYQLISELIVLFKLQGKDKVRRFLTAYAMSQIHTQGSSPYCAVILIDFAQSFVNETTTSGMLKAKELSIVMLSLINRAPEISLSYVQSIYEYYFSCHAVFFESIEKMSDLIHPGNASSHCTRSSYYSSFHLIVNVSKIFFSCMNGESFKMFSTFKCKSYLTGDPQMPEMDNFLYDSEMLLAGHSELNEFMRKYQSFNQTSVGKFCYYLIVLLVMSREHRFDEAADLVLKVLEDLSEKLPVSFLHHQYYLICGKVFAYHQTKTPESEEQVERILARQFERYELWASTNKPTLLPRYLLLSTYKQIRENHVDKLEILDSFEEALQTAHKFHNVYDMCWINLECARWLISINQKRHRISRMVKQGLKILRSLELNNHLRLAEFEFDEYIEDEDHRNKWAGLTNNPTLDTVTTWQQQNMPDKVSPCNDKQLVHGKQFGKKEFDSHLLRLHFDGQYTGLDLNSAIRECLAISEALDENSILTKLMASAIKYSGATYGVIVTKKNQETPFLRTIGSQHNIHTLNNMPISDDICPAQLIRHVLHTGETVNKAHDHIGFANKFENEYFQTTDKKYSVVCLPLKSSLGLFGALYLEGSDGDFGHEDLFNERKCDLLQLFCTQAAVALGKERLLLQMELAKMAAEDATDEKASFLANMSHEIRTPFNSLLSFAIFLLDTKLDSTQREYVEAIQSSAMITLNIIDGILAFSKIEHGSFTLENAPFSLNDCIETAIQVSGETILNDQIELVFCNNCPEIEFVVGDLTRFRQIVINLVGNAIKFTTKGHVLISCDSRKITDDRFEINVSVEDSGIGISKKSQNKVFGAFSQVDGSARREYGGSGLGLAISKKLTELMGGTIRFESEEGIGTTFYVSVIMDAKEYSSPPFSLNKKCLIYSQHCLTAKSISNMLNYFGSTVKVTNQKSEFSTSVQANDIIFVDRGMEPDVSCKTKVIPIDPKPFKRNKLISILKEQPSLPTKVFGNNKSNLSKQYPLRILLAEDNLLNYKVCLKHLDKLGYKADHAKDGVVVLDKCKELLEKDEKYDVILMDIQMPRKDGITATRDLKTLFHTQKKESWLPVIVALTANVAGDDKKRCLEEGMFDFITKPILPDELRRILTKVGETVNM</sequence>
<accession>Q5AHA0</accession>
<accession>A0A1D8PGV5</accession>
<accession>O59892</accession>
<protein>
    <recommendedName>
        <fullName>Histidine protein kinase 1</fullName>
        <ecNumber>2.7.13.3</ecNumber>
    </recommendedName>
</protein>
<keyword id="KW-0067">ATP-binding</keyword>
<keyword id="KW-0961">Cell wall biogenesis/degradation</keyword>
<keyword id="KW-0418">Kinase</keyword>
<keyword id="KW-0547">Nucleotide-binding</keyword>
<keyword id="KW-0597">Phosphoprotein</keyword>
<keyword id="KW-1185">Reference proteome</keyword>
<keyword id="KW-0808">Transferase</keyword>
<keyword id="KW-0902">Two-component regulatory system</keyword>
<keyword id="KW-0843">Virulence</keyword>